<feature type="signal peptide" evidence="2">
    <location>
        <begin position="1"/>
        <end position="26"/>
    </location>
</feature>
<feature type="chain" id="PRO_0000379656" description="Putative defensin-like protein 88">
    <location>
        <begin position="27"/>
        <end position="94"/>
    </location>
</feature>
<feature type="disulfide bond" evidence="1">
    <location>
        <begin position="32"/>
        <end position="72"/>
    </location>
</feature>
<feature type="disulfide bond" evidence="1">
    <location>
        <begin position="38"/>
        <end position="59"/>
    </location>
</feature>
<feature type="disulfide bond" evidence="1">
    <location>
        <begin position="48"/>
        <end position="71"/>
    </location>
</feature>
<evidence type="ECO:0000250" key="1"/>
<evidence type="ECO:0000255" key="2"/>
<evidence type="ECO:0000305" key="3"/>
<sequence length="94" mass="10349">MATQKFSYFLLVLLMVFALILPSIISVEVIPCIAGSKCTNDMTYNELCRFKGFSKGGFCQKYVHQTIGRCCCHPTGLESQESSISGDTNVVITN</sequence>
<keyword id="KW-0929">Antimicrobial</keyword>
<keyword id="KW-1015">Disulfide bond</keyword>
<keyword id="KW-0295">Fungicide</keyword>
<keyword id="KW-0611">Plant defense</keyword>
<keyword id="KW-1185">Reference proteome</keyword>
<keyword id="KW-0964">Secreted</keyword>
<keyword id="KW-0732">Signal</keyword>
<dbReference type="EMBL" id="Z97335">
    <property type="status" value="NOT_ANNOTATED_CDS"/>
    <property type="molecule type" value="Genomic_DNA"/>
</dbReference>
<dbReference type="EMBL" id="AL161537">
    <property type="status" value="NOT_ANNOTATED_CDS"/>
    <property type="molecule type" value="Genomic_DNA"/>
</dbReference>
<dbReference type="EMBL" id="CP002687">
    <property type="protein sequence ID" value="AEE83350.1"/>
    <property type="molecule type" value="Genomic_DNA"/>
</dbReference>
<dbReference type="RefSeq" id="NP_001319926.1">
    <property type="nucleotide sequence ID" value="NM_001340892.1"/>
</dbReference>
<dbReference type="SMR" id="Q2V3J1"/>
<dbReference type="PaxDb" id="3702-AT4G13955.1"/>
<dbReference type="ProteomicsDB" id="224674"/>
<dbReference type="EnsemblPlants" id="AT4G13955.1">
    <property type="protein sequence ID" value="AT4G13955.1"/>
    <property type="gene ID" value="AT4G13955"/>
</dbReference>
<dbReference type="GeneID" id="3770526"/>
<dbReference type="Gramene" id="AT4G13955.1">
    <property type="protein sequence ID" value="AT4G13955.1"/>
    <property type="gene ID" value="AT4G13955"/>
</dbReference>
<dbReference type="KEGG" id="ath:AT4G13955"/>
<dbReference type="Araport" id="AT4G13955"/>
<dbReference type="TAIR" id="AT4G13955"/>
<dbReference type="HOGENOM" id="CLU_180308_0_0_1"/>
<dbReference type="InParanoid" id="Q2V3J1"/>
<dbReference type="OMA" id="SKCTNDM"/>
<dbReference type="PhylomeDB" id="Q2V3J1"/>
<dbReference type="Proteomes" id="UP000006548">
    <property type="component" value="Chromosome 4"/>
</dbReference>
<dbReference type="ExpressionAtlas" id="Q2V3J1">
    <property type="expression patterns" value="baseline"/>
</dbReference>
<dbReference type="GO" id="GO:0005576">
    <property type="term" value="C:extracellular region"/>
    <property type="evidence" value="ECO:0007669"/>
    <property type="project" value="UniProtKB-SubCell"/>
</dbReference>
<dbReference type="GO" id="GO:0050832">
    <property type="term" value="P:defense response to fungus"/>
    <property type="evidence" value="ECO:0007669"/>
    <property type="project" value="UniProtKB-KW"/>
</dbReference>
<dbReference type="GO" id="GO:0031640">
    <property type="term" value="P:killing of cells of another organism"/>
    <property type="evidence" value="ECO:0007669"/>
    <property type="project" value="UniProtKB-KW"/>
</dbReference>
<dbReference type="InterPro" id="IPR010851">
    <property type="entry name" value="DEFL"/>
</dbReference>
<dbReference type="Pfam" id="PF25052">
    <property type="entry name" value="AtDEF-like"/>
    <property type="match status" value="1"/>
</dbReference>
<reference key="1">
    <citation type="journal article" date="1998" name="Nature">
        <title>Analysis of 1.9 Mb of contiguous sequence from chromosome 4 of Arabidopsis thaliana.</title>
        <authorList>
            <person name="Bevan M."/>
            <person name="Bancroft I."/>
            <person name="Bent E."/>
            <person name="Love K."/>
            <person name="Goodman H.M."/>
            <person name="Dean C."/>
            <person name="Bergkamp R."/>
            <person name="Dirkse W."/>
            <person name="van Staveren M."/>
            <person name="Stiekema W."/>
            <person name="Drost L."/>
            <person name="Ridley P."/>
            <person name="Hudson S.-A."/>
            <person name="Patel K."/>
            <person name="Murphy G."/>
            <person name="Piffanelli P."/>
            <person name="Wedler H."/>
            <person name="Wedler E."/>
            <person name="Wambutt R."/>
            <person name="Weitzenegger T."/>
            <person name="Pohl T."/>
            <person name="Terryn N."/>
            <person name="Gielen J."/>
            <person name="Villarroel R."/>
            <person name="De Clercq R."/>
            <person name="van Montagu M."/>
            <person name="Lecharny A."/>
            <person name="Aubourg S."/>
            <person name="Gy I."/>
            <person name="Kreis M."/>
            <person name="Lao N."/>
            <person name="Kavanagh T."/>
            <person name="Hempel S."/>
            <person name="Kotter P."/>
            <person name="Entian K.-D."/>
            <person name="Rieger M."/>
            <person name="Schaefer M."/>
            <person name="Funk B."/>
            <person name="Mueller-Auer S."/>
            <person name="Silvey M."/>
            <person name="James R."/>
            <person name="Monfort A."/>
            <person name="Pons A."/>
            <person name="Puigdomenech P."/>
            <person name="Douka A."/>
            <person name="Voukelatou E."/>
            <person name="Milioni D."/>
            <person name="Hatzopoulos P."/>
            <person name="Piravandi E."/>
            <person name="Obermaier B."/>
            <person name="Hilbert H."/>
            <person name="Duesterhoeft A."/>
            <person name="Moores T."/>
            <person name="Jones J.D.G."/>
            <person name="Eneva T."/>
            <person name="Palme K."/>
            <person name="Benes V."/>
            <person name="Rechmann S."/>
            <person name="Ansorge W."/>
            <person name="Cooke R."/>
            <person name="Berger C."/>
            <person name="Delseny M."/>
            <person name="Voet M."/>
            <person name="Volckaert G."/>
            <person name="Mewes H.-W."/>
            <person name="Klosterman S."/>
            <person name="Schueller C."/>
            <person name="Chalwatzis N."/>
        </authorList>
    </citation>
    <scope>NUCLEOTIDE SEQUENCE [LARGE SCALE GENOMIC DNA]</scope>
    <source>
        <strain>cv. Columbia</strain>
    </source>
</reference>
<reference key="2">
    <citation type="journal article" date="1999" name="Nature">
        <title>Sequence and analysis of chromosome 4 of the plant Arabidopsis thaliana.</title>
        <authorList>
            <person name="Mayer K.F.X."/>
            <person name="Schueller C."/>
            <person name="Wambutt R."/>
            <person name="Murphy G."/>
            <person name="Volckaert G."/>
            <person name="Pohl T."/>
            <person name="Duesterhoeft A."/>
            <person name="Stiekema W."/>
            <person name="Entian K.-D."/>
            <person name="Terryn N."/>
            <person name="Harris B."/>
            <person name="Ansorge W."/>
            <person name="Brandt P."/>
            <person name="Grivell L.A."/>
            <person name="Rieger M."/>
            <person name="Weichselgartner M."/>
            <person name="de Simone V."/>
            <person name="Obermaier B."/>
            <person name="Mache R."/>
            <person name="Mueller M."/>
            <person name="Kreis M."/>
            <person name="Delseny M."/>
            <person name="Puigdomenech P."/>
            <person name="Watson M."/>
            <person name="Schmidtheini T."/>
            <person name="Reichert B."/>
            <person name="Portetelle D."/>
            <person name="Perez-Alonso M."/>
            <person name="Boutry M."/>
            <person name="Bancroft I."/>
            <person name="Vos P."/>
            <person name="Hoheisel J."/>
            <person name="Zimmermann W."/>
            <person name="Wedler H."/>
            <person name="Ridley P."/>
            <person name="Langham S.-A."/>
            <person name="McCullagh B."/>
            <person name="Bilham L."/>
            <person name="Robben J."/>
            <person name="van der Schueren J."/>
            <person name="Grymonprez B."/>
            <person name="Chuang Y.-J."/>
            <person name="Vandenbussche F."/>
            <person name="Braeken M."/>
            <person name="Weltjens I."/>
            <person name="Voet M."/>
            <person name="Bastiaens I."/>
            <person name="Aert R."/>
            <person name="Defoor E."/>
            <person name="Weitzenegger T."/>
            <person name="Bothe G."/>
            <person name="Ramsperger U."/>
            <person name="Hilbert H."/>
            <person name="Braun M."/>
            <person name="Holzer E."/>
            <person name="Brandt A."/>
            <person name="Peters S."/>
            <person name="van Staveren M."/>
            <person name="Dirkse W."/>
            <person name="Mooijman P."/>
            <person name="Klein Lankhorst R."/>
            <person name="Rose M."/>
            <person name="Hauf J."/>
            <person name="Koetter P."/>
            <person name="Berneiser S."/>
            <person name="Hempel S."/>
            <person name="Feldpausch M."/>
            <person name="Lamberth S."/>
            <person name="Van den Daele H."/>
            <person name="De Keyser A."/>
            <person name="Buysshaert C."/>
            <person name="Gielen J."/>
            <person name="Villarroel R."/>
            <person name="De Clercq R."/>
            <person name="van Montagu M."/>
            <person name="Rogers J."/>
            <person name="Cronin A."/>
            <person name="Quail M.A."/>
            <person name="Bray-Allen S."/>
            <person name="Clark L."/>
            <person name="Doggett J."/>
            <person name="Hall S."/>
            <person name="Kay M."/>
            <person name="Lennard N."/>
            <person name="McLay K."/>
            <person name="Mayes R."/>
            <person name="Pettett A."/>
            <person name="Rajandream M.A."/>
            <person name="Lyne M."/>
            <person name="Benes V."/>
            <person name="Rechmann S."/>
            <person name="Borkova D."/>
            <person name="Bloecker H."/>
            <person name="Scharfe M."/>
            <person name="Grimm M."/>
            <person name="Loehnert T.-H."/>
            <person name="Dose S."/>
            <person name="de Haan M."/>
            <person name="Maarse A.C."/>
            <person name="Schaefer M."/>
            <person name="Mueller-Auer S."/>
            <person name="Gabel C."/>
            <person name="Fuchs M."/>
            <person name="Fartmann B."/>
            <person name="Granderath K."/>
            <person name="Dauner D."/>
            <person name="Herzl A."/>
            <person name="Neumann S."/>
            <person name="Argiriou A."/>
            <person name="Vitale D."/>
            <person name="Liguori R."/>
            <person name="Piravandi E."/>
            <person name="Massenet O."/>
            <person name="Quigley F."/>
            <person name="Clabauld G."/>
            <person name="Muendlein A."/>
            <person name="Felber R."/>
            <person name="Schnabl S."/>
            <person name="Hiller R."/>
            <person name="Schmidt W."/>
            <person name="Lecharny A."/>
            <person name="Aubourg S."/>
            <person name="Chefdor F."/>
            <person name="Cooke R."/>
            <person name="Berger C."/>
            <person name="Monfort A."/>
            <person name="Casacuberta E."/>
            <person name="Gibbons T."/>
            <person name="Weber N."/>
            <person name="Vandenbol M."/>
            <person name="Bargues M."/>
            <person name="Terol J."/>
            <person name="Torres A."/>
            <person name="Perez-Perez A."/>
            <person name="Purnelle B."/>
            <person name="Bent E."/>
            <person name="Johnson S."/>
            <person name="Tacon D."/>
            <person name="Jesse T."/>
            <person name="Heijnen L."/>
            <person name="Schwarz S."/>
            <person name="Scholler P."/>
            <person name="Heber S."/>
            <person name="Francs P."/>
            <person name="Bielke C."/>
            <person name="Frishman D."/>
            <person name="Haase D."/>
            <person name="Lemcke K."/>
            <person name="Mewes H.-W."/>
            <person name="Stocker S."/>
            <person name="Zaccaria P."/>
            <person name="Bevan M."/>
            <person name="Wilson R.K."/>
            <person name="de la Bastide M."/>
            <person name="Habermann K."/>
            <person name="Parnell L."/>
            <person name="Dedhia N."/>
            <person name="Gnoj L."/>
            <person name="Schutz K."/>
            <person name="Huang E."/>
            <person name="Spiegel L."/>
            <person name="Sekhon M."/>
            <person name="Murray J."/>
            <person name="Sheet P."/>
            <person name="Cordes M."/>
            <person name="Abu-Threideh J."/>
            <person name="Stoneking T."/>
            <person name="Kalicki J."/>
            <person name="Graves T."/>
            <person name="Harmon G."/>
            <person name="Edwards J."/>
            <person name="Latreille P."/>
            <person name="Courtney L."/>
            <person name="Cloud J."/>
            <person name="Abbott A."/>
            <person name="Scott K."/>
            <person name="Johnson D."/>
            <person name="Minx P."/>
            <person name="Bentley D."/>
            <person name="Fulton B."/>
            <person name="Miller N."/>
            <person name="Greco T."/>
            <person name="Kemp K."/>
            <person name="Kramer J."/>
            <person name="Fulton L."/>
            <person name="Mardis E."/>
            <person name="Dante M."/>
            <person name="Pepin K."/>
            <person name="Hillier L.W."/>
            <person name="Nelson J."/>
            <person name="Spieth J."/>
            <person name="Ryan E."/>
            <person name="Andrews S."/>
            <person name="Geisel C."/>
            <person name="Layman D."/>
            <person name="Du H."/>
            <person name="Ali J."/>
            <person name="Berghoff A."/>
            <person name="Jones K."/>
            <person name="Drone K."/>
            <person name="Cotton M."/>
            <person name="Joshu C."/>
            <person name="Antonoiu B."/>
            <person name="Zidanic M."/>
            <person name="Strong C."/>
            <person name="Sun H."/>
            <person name="Lamar B."/>
            <person name="Yordan C."/>
            <person name="Ma P."/>
            <person name="Zhong J."/>
            <person name="Preston R."/>
            <person name="Vil D."/>
            <person name="Shekher M."/>
            <person name="Matero A."/>
            <person name="Shah R."/>
            <person name="Swaby I.K."/>
            <person name="O'Shaughnessy A."/>
            <person name="Rodriguez M."/>
            <person name="Hoffman J."/>
            <person name="Till S."/>
            <person name="Granat S."/>
            <person name="Shohdy N."/>
            <person name="Hasegawa A."/>
            <person name="Hameed A."/>
            <person name="Lodhi M."/>
            <person name="Johnson A."/>
            <person name="Chen E."/>
            <person name="Marra M.A."/>
            <person name="Martienssen R."/>
            <person name="McCombie W.R."/>
        </authorList>
    </citation>
    <scope>NUCLEOTIDE SEQUENCE [LARGE SCALE GENOMIC DNA]</scope>
    <source>
        <strain>cv. Columbia</strain>
    </source>
</reference>
<reference key="3">
    <citation type="journal article" date="2017" name="Plant J.">
        <title>Araport11: a complete reannotation of the Arabidopsis thaliana reference genome.</title>
        <authorList>
            <person name="Cheng C.Y."/>
            <person name="Krishnakumar V."/>
            <person name="Chan A.P."/>
            <person name="Thibaud-Nissen F."/>
            <person name="Schobel S."/>
            <person name="Town C.D."/>
        </authorList>
    </citation>
    <scope>GENOME REANNOTATION</scope>
    <source>
        <strain>cv. Columbia</strain>
    </source>
</reference>
<reference key="4">
    <citation type="journal article" date="2005" name="Plant Physiol.">
        <title>Genome organization of more than 300 defensin-like genes in Arabidopsis.</title>
        <authorList>
            <person name="Silverstein K.A.T."/>
            <person name="Graham M.A."/>
            <person name="Paape T.D."/>
            <person name="VandenBosch K.A."/>
        </authorList>
    </citation>
    <scope>GENE FAMILY</scope>
</reference>
<protein>
    <recommendedName>
        <fullName>Putative defensin-like protein 88</fullName>
    </recommendedName>
</protein>
<proteinExistence type="uncertain"/>
<name>DEF88_ARATH</name>
<accession>Q2V3J1</accession>
<gene>
    <name type="ordered locus">At4g13955</name>
    <name type="ORF">FCAALL</name>
</gene>
<organism>
    <name type="scientific">Arabidopsis thaliana</name>
    <name type="common">Mouse-ear cress</name>
    <dbReference type="NCBI Taxonomy" id="3702"/>
    <lineage>
        <taxon>Eukaryota</taxon>
        <taxon>Viridiplantae</taxon>
        <taxon>Streptophyta</taxon>
        <taxon>Embryophyta</taxon>
        <taxon>Tracheophyta</taxon>
        <taxon>Spermatophyta</taxon>
        <taxon>Magnoliopsida</taxon>
        <taxon>eudicotyledons</taxon>
        <taxon>Gunneridae</taxon>
        <taxon>Pentapetalae</taxon>
        <taxon>rosids</taxon>
        <taxon>malvids</taxon>
        <taxon>Brassicales</taxon>
        <taxon>Brassicaceae</taxon>
        <taxon>Camelineae</taxon>
        <taxon>Arabidopsis</taxon>
    </lineage>
</organism>
<comment type="subcellular location">
    <subcellularLocation>
        <location evidence="1">Secreted</location>
    </subcellularLocation>
</comment>
<comment type="similarity">
    <text evidence="3">Belongs to the DEFL family.</text>
</comment>
<comment type="caution">
    <text evidence="3">Could be the product of a pseudogene. Lacks 1 of the 4 disulfide bonds, which are conserved features of the family.</text>
</comment>